<evidence type="ECO:0000250" key="1"/>
<evidence type="ECO:0000250" key="2">
    <source>
        <dbReference type="UniProtKB" id="Q07912"/>
    </source>
</evidence>
<evidence type="ECO:0000255" key="3">
    <source>
        <dbReference type="PROSITE-ProRule" id="PRU00159"/>
    </source>
</evidence>
<evidence type="ECO:0000255" key="4">
    <source>
        <dbReference type="PROSITE-ProRule" id="PRU00192"/>
    </source>
</evidence>
<evidence type="ECO:0000255" key="5">
    <source>
        <dbReference type="PROSITE-ProRule" id="PRU10028"/>
    </source>
</evidence>
<evidence type="ECO:0000256" key="6">
    <source>
        <dbReference type="SAM" id="MobiDB-lite"/>
    </source>
</evidence>
<evidence type="ECO:0000269" key="7">
    <source>
    </source>
</evidence>
<evidence type="ECO:0000269" key="8">
    <source>
    </source>
</evidence>
<evidence type="ECO:0000269" key="9">
    <source>
    </source>
</evidence>
<evidence type="ECO:0000269" key="10">
    <source>
    </source>
</evidence>
<evidence type="ECO:0000269" key="11">
    <source>
    </source>
</evidence>
<evidence type="ECO:0000269" key="12">
    <source>
    </source>
</evidence>
<evidence type="ECO:0000269" key="13">
    <source>
    </source>
</evidence>
<evidence type="ECO:0000269" key="14">
    <source>
    </source>
</evidence>
<evidence type="ECO:0000269" key="15">
    <source>
    </source>
</evidence>
<evidence type="ECO:0000303" key="16">
    <source>
    </source>
</evidence>
<evidence type="ECO:0000303" key="17">
    <source>
    </source>
</evidence>
<evidence type="ECO:0000305" key="18"/>
<evidence type="ECO:0007744" key="19">
    <source>
    </source>
</evidence>
<evidence type="ECO:0007744" key="20">
    <source>
    </source>
</evidence>
<evidence type="ECO:0007744" key="21">
    <source>
    </source>
</evidence>
<reference key="1">
    <citation type="journal article" date="2006" name="Proc. Natl. Acad. Sci. U.S.A.">
        <title>Activation of the nonreceptor protein tyrosine kinase Ack by multiple extracellular stimuli.</title>
        <authorList>
            <person name="Galisteo M.L."/>
            <person name="Yang Y."/>
            <person name="Urena J."/>
            <person name="Schlessinger J."/>
        </authorList>
    </citation>
    <scope>NUCLEOTIDE SEQUENCE [MRNA] (ISOFORM 1)</scope>
    <scope>TISSUE SPECIFICITY</scope>
    <scope>SUBCELLULAR LOCATION</scope>
    <scope>MUTAGENESIS OF LYS-158; TRP-424 AND HIS-464</scope>
</reference>
<reference key="2">
    <citation type="submission" date="1997-12" db="EMBL/GenBank/DDBJ databases">
        <title>The protein tyrosine kinase Ack is associated with and activated in vivo by CDC42Hs.</title>
        <authorList>
            <person name="Her J.-H."/>
            <person name="Bolen J.B."/>
        </authorList>
    </citation>
    <scope>NUCLEOTIDE SEQUENCE [MRNA] (ISOFORM 1)</scope>
    <source>
        <tissue>Brain</tissue>
    </source>
</reference>
<reference key="3">
    <citation type="journal article" date="2004" name="Genome Res.">
        <title>The status, quality, and expansion of the NIH full-length cDNA project: the Mammalian Gene Collection (MGC).</title>
        <authorList>
            <consortium name="The MGC Project Team"/>
        </authorList>
    </citation>
    <scope>NUCLEOTIDE SEQUENCE [LARGE SCALE MRNA] (ISOFORMS 2 AND 3)</scope>
    <source>
        <strain>C57BL/6J</strain>
        <tissue>Brain</tissue>
        <tissue>Colon</tissue>
    </source>
</reference>
<reference key="4">
    <citation type="journal article" date="2005" name="Science">
        <title>The transcriptional landscape of the mammalian genome.</title>
        <authorList>
            <person name="Carninci P."/>
            <person name="Kasukawa T."/>
            <person name="Katayama S."/>
            <person name="Gough J."/>
            <person name="Frith M.C."/>
            <person name="Maeda N."/>
            <person name="Oyama R."/>
            <person name="Ravasi T."/>
            <person name="Lenhard B."/>
            <person name="Wells C."/>
            <person name="Kodzius R."/>
            <person name="Shimokawa K."/>
            <person name="Bajic V.B."/>
            <person name="Brenner S.E."/>
            <person name="Batalov S."/>
            <person name="Forrest A.R."/>
            <person name="Zavolan M."/>
            <person name="Davis M.J."/>
            <person name="Wilming L.G."/>
            <person name="Aidinis V."/>
            <person name="Allen J.E."/>
            <person name="Ambesi-Impiombato A."/>
            <person name="Apweiler R."/>
            <person name="Aturaliya R.N."/>
            <person name="Bailey T.L."/>
            <person name="Bansal M."/>
            <person name="Baxter L."/>
            <person name="Beisel K.W."/>
            <person name="Bersano T."/>
            <person name="Bono H."/>
            <person name="Chalk A.M."/>
            <person name="Chiu K.P."/>
            <person name="Choudhary V."/>
            <person name="Christoffels A."/>
            <person name="Clutterbuck D.R."/>
            <person name="Crowe M.L."/>
            <person name="Dalla E."/>
            <person name="Dalrymple B.P."/>
            <person name="de Bono B."/>
            <person name="Della Gatta G."/>
            <person name="di Bernardo D."/>
            <person name="Down T."/>
            <person name="Engstrom P."/>
            <person name="Fagiolini M."/>
            <person name="Faulkner G."/>
            <person name="Fletcher C.F."/>
            <person name="Fukushima T."/>
            <person name="Furuno M."/>
            <person name="Futaki S."/>
            <person name="Gariboldi M."/>
            <person name="Georgii-Hemming P."/>
            <person name="Gingeras T.R."/>
            <person name="Gojobori T."/>
            <person name="Green R.E."/>
            <person name="Gustincich S."/>
            <person name="Harbers M."/>
            <person name="Hayashi Y."/>
            <person name="Hensch T.K."/>
            <person name="Hirokawa N."/>
            <person name="Hill D."/>
            <person name="Huminiecki L."/>
            <person name="Iacono M."/>
            <person name="Ikeo K."/>
            <person name="Iwama A."/>
            <person name="Ishikawa T."/>
            <person name="Jakt M."/>
            <person name="Kanapin A."/>
            <person name="Katoh M."/>
            <person name="Kawasawa Y."/>
            <person name="Kelso J."/>
            <person name="Kitamura H."/>
            <person name="Kitano H."/>
            <person name="Kollias G."/>
            <person name="Krishnan S.P."/>
            <person name="Kruger A."/>
            <person name="Kummerfeld S.K."/>
            <person name="Kurochkin I.V."/>
            <person name="Lareau L.F."/>
            <person name="Lazarevic D."/>
            <person name="Lipovich L."/>
            <person name="Liu J."/>
            <person name="Liuni S."/>
            <person name="McWilliam S."/>
            <person name="Madan Babu M."/>
            <person name="Madera M."/>
            <person name="Marchionni L."/>
            <person name="Matsuda H."/>
            <person name="Matsuzawa S."/>
            <person name="Miki H."/>
            <person name="Mignone F."/>
            <person name="Miyake S."/>
            <person name="Morris K."/>
            <person name="Mottagui-Tabar S."/>
            <person name="Mulder N."/>
            <person name="Nakano N."/>
            <person name="Nakauchi H."/>
            <person name="Ng P."/>
            <person name="Nilsson R."/>
            <person name="Nishiguchi S."/>
            <person name="Nishikawa S."/>
            <person name="Nori F."/>
            <person name="Ohara O."/>
            <person name="Okazaki Y."/>
            <person name="Orlando V."/>
            <person name="Pang K.C."/>
            <person name="Pavan W.J."/>
            <person name="Pavesi G."/>
            <person name="Pesole G."/>
            <person name="Petrovsky N."/>
            <person name="Piazza S."/>
            <person name="Reed J."/>
            <person name="Reid J.F."/>
            <person name="Ring B.Z."/>
            <person name="Ringwald M."/>
            <person name="Rost B."/>
            <person name="Ruan Y."/>
            <person name="Salzberg S.L."/>
            <person name="Sandelin A."/>
            <person name="Schneider C."/>
            <person name="Schoenbach C."/>
            <person name="Sekiguchi K."/>
            <person name="Semple C.A."/>
            <person name="Seno S."/>
            <person name="Sessa L."/>
            <person name="Sheng Y."/>
            <person name="Shibata Y."/>
            <person name="Shimada H."/>
            <person name="Shimada K."/>
            <person name="Silva D."/>
            <person name="Sinclair B."/>
            <person name="Sperling S."/>
            <person name="Stupka E."/>
            <person name="Sugiura K."/>
            <person name="Sultana R."/>
            <person name="Takenaka Y."/>
            <person name="Taki K."/>
            <person name="Tammoja K."/>
            <person name="Tan S.L."/>
            <person name="Tang S."/>
            <person name="Taylor M.S."/>
            <person name="Tegner J."/>
            <person name="Teichmann S.A."/>
            <person name="Ueda H.R."/>
            <person name="van Nimwegen E."/>
            <person name="Verardo R."/>
            <person name="Wei C.L."/>
            <person name="Yagi K."/>
            <person name="Yamanishi H."/>
            <person name="Zabarovsky E."/>
            <person name="Zhu S."/>
            <person name="Zimmer A."/>
            <person name="Hide W."/>
            <person name="Bult C."/>
            <person name="Grimmond S.M."/>
            <person name="Teasdale R.D."/>
            <person name="Liu E.T."/>
            <person name="Brusic V."/>
            <person name="Quackenbush J."/>
            <person name="Wahlestedt C."/>
            <person name="Mattick J.S."/>
            <person name="Hume D.A."/>
            <person name="Kai C."/>
            <person name="Sasaki D."/>
            <person name="Tomaru Y."/>
            <person name="Fukuda S."/>
            <person name="Kanamori-Katayama M."/>
            <person name="Suzuki M."/>
            <person name="Aoki J."/>
            <person name="Arakawa T."/>
            <person name="Iida J."/>
            <person name="Imamura K."/>
            <person name="Itoh M."/>
            <person name="Kato T."/>
            <person name="Kawaji H."/>
            <person name="Kawagashira N."/>
            <person name="Kawashima T."/>
            <person name="Kojima M."/>
            <person name="Kondo S."/>
            <person name="Konno H."/>
            <person name="Nakano K."/>
            <person name="Ninomiya N."/>
            <person name="Nishio T."/>
            <person name="Okada M."/>
            <person name="Plessy C."/>
            <person name="Shibata K."/>
            <person name="Shiraki T."/>
            <person name="Suzuki S."/>
            <person name="Tagami M."/>
            <person name="Waki K."/>
            <person name="Watahiki A."/>
            <person name="Okamura-Oho Y."/>
            <person name="Suzuki H."/>
            <person name="Kawai J."/>
            <person name="Hayashizaki Y."/>
        </authorList>
    </citation>
    <scope>NUCLEOTIDE SEQUENCE [LARGE SCALE MRNA] OF 121-1055 (ISOFORM 3)</scope>
    <source>
        <strain>NOD</strain>
        <tissue>Thymus</tissue>
    </source>
</reference>
<reference key="5">
    <citation type="journal article" date="2005" name="J. Comp. Neurol.">
        <title>Expression, synaptic localization, and developmental regulation of Ack1/Pyk1, a cytoplasmic tyrosine kinase highly expressed in the developing and adult brain.</title>
        <authorList>
            <person name="Urena J.M."/>
            <person name="La Torre A."/>
            <person name="Martinez A."/>
            <person name="Lowenstein E."/>
            <person name="Franco N."/>
            <person name="Winsky-Sommerer R."/>
            <person name="Fontana X."/>
            <person name="Casaroli-Marano R."/>
            <person name="Ibanez-Sabio M.A."/>
            <person name="Pascual M."/>
            <person name="Del Rio J.A."/>
            <person name="de Lecea L."/>
            <person name="Soriano E."/>
        </authorList>
    </citation>
    <scope>INTERACTION WITH CDC42</scope>
    <scope>TISSUE SPECIFICITY</scope>
    <scope>DEVELOPMENTAL STAGE</scope>
</reference>
<reference key="6">
    <citation type="journal article" date="2006" name="Gene Expr. Patterns">
        <title>Expression pattern of ACK1 tyrosine kinase during brain development in the mouse.</title>
        <authorList>
            <person name="La Torre A."/>
            <person name="del Rio J.A."/>
            <person name="Soriano E."/>
            <person name="Urena J.M."/>
        </authorList>
    </citation>
    <scope>TISSUE SPECIFICITY</scope>
    <scope>DEVELOPMENTAL STAGE</scope>
</reference>
<reference key="7">
    <citation type="journal article" date="2007" name="Mol. Biol. Cell">
        <title>Activated Cdc42-associated kinase 1 is a component of EGF receptor signaling complex and regulates EGF receptor degradation.</title>
        <authorList>
            <person name="Shen F."/>
            <person name="Lin Q."/>
            <person name="Gu Y."/>
            <person name="Childress C."/>
            <person name="Yang W."/>
        </authorList>
    </citation>
    <scope>FUNCTION</scope>
    <scope>INTERACTION WITH EGFR</scope>
    <scope>SUBCELLULAR LOCATION</scope>
    <scope>DOMAIN EBD AND UBA</scope>
    <scope>MUTAGENESIS OF TYR-650</scope>
</reference>
<reference key="8">
    <citation type="journal article" date="2008" name="Biochem. Biophys. Res. Commun.">
        <title>Nephrocystin-1 interacts directly with Ack1 and is expressed in human collecting duct.</title>
        <authorList>
            <person name="Eley L."/>
            <person name="Moochhala S.H."/>
            <person name="Simms R."/>
            <person name="Hildebrandt F."/>
            <person name="Sayer J.A."/>
        </authorList>
    </citation>
    <scope>SUBCELLULAR LOCATION</scope>
</reference>
<reference key="9">
    <citation type="journal article" date="2008" name="J. Proteome Res.">
        <title>Large-scale identification and evolution indexing of tyrosine phosphorylation sites from murine brain.</title>
        <authorList>
            <person name="Ballif B.A."/>
            <person name="Carey G.R."/>
            <person name="Sunyaev S.R."/>
            <person name="Gygi S.P."/>
        </authorList>
    </citation>
    <scope>PHOSPHORYLATION [LARGE SCALE ANALYSIS] AT TYR-518 (ISOFORMS 2 AND 3)</scope>
    <scope>IDENTIFICATION BY MASS SPECTROMETRY [LARGE SCALE ANALYSIS]</scope>
    <source>
        <tissue>Brain</tissue>
    </source>
</reference>
<reference key="10">
    <citation type="journal article" date="2010" name="Cell">
        <title>A tissue-specific atlas of mouse protein phosphorylation and expression.</title>
        <authorList>
            <person name="Huttlin E.L."/>
            <person name="Jedrychowski M.P."/>
            <person name="Elias J.E."/>
            <person name="Goswami T."/>
            <person name="Rad R."/>
            <person name="Beausoleil S.A."/>
            <person name="Villen J."/>
            <person name="Haas W."/>
            <person name="Sowa M.E."/>
            <person name="Gygi S.P."/>
        </authorList>
    </citation>
    <scope>PHOSPHORYLATION [LARGE SCALE ANALYSIS] AT THR-113</scope>
    <scope>IDENTIFICATION BY MASS SPECTROMETRY [LARGE SCALE ANALYSIS]</scope>
    <source>
        <tissue>Kidney</tissue>
    </source>
</reference>
<reference key="11">
    <citation type="journal article" date="2010" name="Mol. Cell. Biol.">
        <title>HECT E3 ubiquitin ligase Nedd4-1 ubiquitinates ACK and regulates epidermal growth factor (EGF)-induced degradation of EGF receptor and ACK.</title>
        <authorList>
            <person name="Lin Q."/>
            <person name="Wang J."/>
            <person name="Childress C."/>
            <person name="Sudol M."/>
            <person name="Carey D.J."/>
            <person name="Yang W."/>
        </authorList>
    </citation>
    <scope>INTERACTION WITH NEDD4 AND NEDD4L</scope>
    <scope>UBIQUITINATION</scope>
    <scope>INDUCTION</scope>
    <scope>DOMAIN SAM-LIKE AND UBA</scope>
</reference>
<reference key="12">
    <citation type="journal article" date="2010" name="PLoS ONE">
        <title>Ack1 mediated AKT/PKB tyrosine 176 phosphorylation regulates its activation.</title>
        <authorList>
            <person name="Mahajan K."/>
            <person name="Coppola D."/>
            <person name="Challa S."/>
            <person name="Fang B."/>
            <person name="Chen Y.A."/>
            <person name="Zhu W."/>
            <person name="Lopez A.S."/>
            <person name="Koomen J."/>
            <person name="Engelman R.W."/>
            <person name="Rivera C."/>
            <person name="Muraoka-Cook R.S."/>
            <person name="Cheng J.Q."/>
            <person name="Schoenbrunn E."/>
            <person name="Sebti S.M."/>
            <person name="Earp H.S."/>
            <person name="Mahajan N.P."/>
        </authorList>
    </citation>
    <scope>FUNCTION</scope>
    <scope>INTERACTION WITH AKT1</scope>
    <scope>SUBCELLULAR LOCATION</scope>
</reference>
<reference key="13">
    <citation type="journal article" date="2011" name="Mol. Biol. Cell">
        <title>Constitutive activated Cdc42-associated kinase (Ack) phosphorylation at arrested endocytic clathrin-coated pits of cells that lack dynamin.</title>
        <authorList>
            <person name="Shen H."/>
            <person name="Ferguson S.M."/>
            <person name="Dephoure N."/>
            <person name="Park R."/>
            <person name="Yang Y."/>
            <person name="Volpicelli-Daley L."/>
            <person name="Gygi S."/>
            <person name="Schlessinger J."/>
            <person name="De Camilli P."/>
        </authorList>
    </citation>
    <scope>SUBCELLULAR LOCATION</scope>
    <scope>PHOSPHORYLATION AT TYR-284 AND TYR-533</scope>
</reference>
<reference key="14">
    <citation type="journal article" date="2014" name="EMBO Rep.">
        <title>Ack kinase regulates CTP synthase filaments during Drosophila oogenesis.</title>
        <authorList>
            <person name="Strochlic T.I."/>
            <person name="Stavrides K.P."/>
            <person name="Thomas S.V."/>
            <person name="Nicolas E."/>
            <person name="O'Reilly A.M."/>
            <person name="Peterson J.R."/>
        </authorList>
    </citation>
    <scope>SUBCELLULAR LOCATION</scope>
</reference>
<reference key="15">
    <citation type="journal article" date="2014" name="Mol. Cell. Proteomics">
        <title>Immunoaffinity enrichment and mass spectrometry analysis of protein methylation.</title>
        <authorList>
            <person name="Guo A."/>
            <person name="Gu H."/>
            <person name="Zhou J."/>
            <person name="Mulhern D."/>
            <person name="Wang Y."/>
            <person name="Lee K.A."/>
            <person name="Yang V."/>
            <person name="Aguiar M."/>
            <person name="Kornhauser J."/>
            <person name="Jia X."/>
            <person name="Ren J."/>
            <person name="Beausoleil S.A."/>
            <person name="Silva J.C."/>
            <person name="Vemulapalli V."/>
            <person name="Bedford M.T."/>
            <person name="Comb M.J."/>
        </authorList>
    </citation>
    <scope>METHYLATION [LARGE SCALE ANALYSIS] AT ARG-854</scope>
    <scope>IDENTIFICATION BY MASS SPECTROMETRY [LARGE SCALE ANALYSIS]</scope>
    <source>
        <tissue>Brain</tissue>
    </source>
</reference>
<organism>
    <name type="scientific">Mus musculus</name>
    <name type="common">Mouse</name>
    <dbReference type="NCBI Taxonomy" id="10090"/>
    <lineage>
        <taxon>Eukaryota</taxon>
        <taxon>Metazoa</taxon>
        <taxon>Chordata</taxon>
        <taxon>Craniata</taxon>
        <taxon>Vertebrata</taxon>
        <taxon>Euteleostomi</taxon>
        <taxon>Mammalia</taxon>
        <taxon>Eutheria</taxon>
        <taxon>Euarchontoglires</taxon>
        <taxon>Glires</taxon>
        <taxon>Rodentia</taxon>
        <taxon>Myomorpha</taxon>
        <taxon>Muroidea</taxon>
        <taxon>Muridae</taxon>
        <taxon>Murinae</taxon>
        <taxon>Mus</taxon>
        <taxon>Mus</taxon>
    </lineage>
</organism>
<accession>O54967</accession>
<accession>Q0Z844</accession>
<accession>Q8C2U0</accession>
<accession>Q8K0K4</accession>
<dbReference type="EC" id="2.7.10.2"/>
<dbReference type="EC" id="2.7.11.1"/>
<dbReference type="EMBL" id="DQ666696">
    <property type="protein sequence ID" value="ABG46266.1"/>
    <property type="molecule type" value="mRNA"/>
</dbReference>
<dbReference type="EMBL" id="AF037260">
    <property type="protein sequence ID" value="AAC04786.1"/>
    <property type="molecule type" value="mRNA"/>
</dbReference>
<dbReference type="EMBL" id="BC031168">
    <property type="protein sequence ID" value="AAH31168.1"/>
    <property type="status" value="ALT_SEQ"/>
    <property type="molecule type" value="mRNA"/>
</dbReference>
<dbReference type="EMBL" id="BC052421">
    <property type="protein sequence ID" value="AAH52421.1"/>
    <property type="molecule type" value="mRNA"/>
</dbReference>
<dbReference type="EMBL" id="AK087965">
    <property type="protein sequence ID" value="BAC40063.1"/>
    <property type="molecule type" value="mRNA"/>
</dbReference>
<dbReference type="CCDS" id="CCDS37313.1">
    <molecule id="O54967-1"/>
</dbReference>
<dbReference type="CCDS" id="CCDS49828.1">
    <molecule id="O54967-2"/>
</dbReference>
<dbReference type="RefSeq" id="NP_001103617.1">
    <property type="nucleotide sequence ID" value="NM_001110147.1"/>
</dbReference>
<dbReference type="RefSeq" id="NP_001276372.1">
    <property type="nucleotide sequence ID" value="NM_001289443.1"/>
</dbReference>
<dbReference type="RefSeq" id="NP_001334114.1">
    <property type="nucleotide sequence ID" value="NM_001347185.1"/>
</dbReference>
<dbReference type="RefSeq" id="NP_058068.2">
    <property type="nucleotide sequence ID" value="NM_016788.3"/>
</dbReference>
<dbReference type="SMR" id="O54967"/>
<dbReference type="BioGRID" id="206174">
    <property type="interactions" value="76"/>
</dbReference>
<dbReference type="CORUM" id="O54967"/>
<dbReference type="DIP" id="DIP-57223N"/>
<dbReference type="FunCoup" id="O54967">
    <property type="interactions" value="348"/>
</dbReference>
<dbReference type="IntAct" id="O54967">
    <property type="interactions" value="3"/>
</dbReference>
<dbReference type="MINT" id="O54967"/>
<dbReference type="STRING" id="10090.ENSMUSP00000110777"/>
<dbReference type="BindingDB" id="O54967"/>
<dbReference type="ChEMBL" id="CHEMBL2079848"/>
<dbReference type="GlyGen" id="O54967">
    <property type="glycosylation" value="8 sites, 1 O-linked glycan (4 sites)"/>
</dbReference>
<dbReference type="iPTMnet" id="O54967"/>
<dbReference type="PhosphoSitePlus" id="O54967"/>
<dbReference type="jPOST" id="O54967"/>
<dbReference type="PaxDb" id="10090-ENSMUSP00000110777"/>
<dbReference type="PeptideAtlas" id="O54967"/>
<dbReference type="ProteomicsDB" id="285931">
    <molecule id="O54967-1"/>
</dbReference>
<dbReference type="ProteomicsDB" id="285932">
    <molecule id="O54967-2"/>
</dbReference>
<dbReference type="ProteomicsDB" id="285933">
    <molecule id="O54967-3"/>
</dbReference>
<dbReference type="Pumba" id="O54967"/>
<dbReference type="DNASU" id="51789"/>
<dbReference type="GeneID" id="51789"/>
<dbReference type="KEGG" id="mmu:51789"/>
<dbReference type="UCSC" id="uc007yzc.2">
    <molecule id="O54967-2"/>
    <property type="organism name" value="mouse"/>
</dbReference>
<dbReference type="AGR" id="MGI:1858308"/>
<dbReference type="CTD" id="10188"/>
<dbReference type="MGI" id="MGI:1858308">
    <property type="gene designation" value="Tnk2"/>
</dbReference>
<dbReference type="eggNOG" id="KOG0199">
    <property type="taxonomic scope" value="Eukaryota"/>
</dbReference>
<dbReference type="InParanoid" id="O54967"/>
<dbReference type="OrthoDB" id="635774at2759"/>
<dbReference type="PhylomeDB" id="O54967"/>
<dbReference type="Reactome" id="R-MMU-9842663">
    <property type="pathway name" value="Signaling by LTK"/>
</dbReference>
<dbReference type="BioGRID-ORCS" id="51789">
    <property type="hits" value="2 hits in 64 CRISPR screens"/>
</dbReference>
<dbReference type="ChiTaRS" id="Tnk2">
    <property type="organism name" value="mouse"/>
</dbReference>
<dbReference type="PRO" id="PR:O54967"/>
<dbReference type="Proteomes" id="UP000000589">
    <property type="component" value="Unplaced"/>
</dbReference>
<dbReference type="RNAct" id="O54967">
    <property type="molecule type" value="protein"/>
</dbReference>
<dbReference type="GO" id="GO:0005912">
    <property type="term" value="C:adherens junction"/>
    <property type="evidence" value="ECO:0007669"/>
    <property type="project" value="UniProtKB-SubCell"/>
</dbReference>
<dbReference type="GO" id="GO:0030424">
    <property type="term" value="C:axon"/>
    <property type="evidence" value="ECO:0000314"/>
    <property type="project" value="MGI"/>
</dbReference>
<dbReference type="GO" id="GO:0005905">
    <property type="term" value="C:clathrin-coated pit"/>
    <property type="evidence" value="ECO:0007669"/>
    <property type="project" value="UniProtKB-SubCell"/>
</dbReference>
<dbReference type="GO" id="GO:0030136">
    <property type="term" value="C:clathrin-coated vesicle"/>
    <property type="evidence" value="ECO:0007669"/>
    <property type="project" value="UniProtKB-SubCell"/>
</dbReference>
<dbReference type="GO" id="GO:0005737">
    <property type="term" value="C:cytoplasm"/>
    <property type="evidence" value="ECO:0000250"/>
    <property type="project" value="UniProtKB"/>
</dbReference>
<dbReference type="GO" id="GO:0030659">
    <property type="term" value="C:cytoplasmic vesicle membrane"/>
    <property type="evidence" value="ECO:0007669"/>
    <property type="project" value="UniProtKB-SubCell"/>
</dbReference>
<dbReference type="GO" id="GO:0030425">
    <property type="term" value="C:dendrite"/>
    <property type="evidence" value="ECO:0000314"/>
    <property type="project" value="MGI"/>
</dbReference>
<dbReference type="GO" id="GO:0005768">
    <property type="term" value="C:endosome"/>
    <property type="evidence" value="ECO:0000314"/>
    <property type="project" value="UniProtKB"/>
</dbReference>
<dbReference type="GO" id="GO:0030426">
    <property type="term" value="C:growth cone"/>
    <property type="evidence" value="ECO:0000314"/>
    <property type="project" value="MGI"/>
</dbReference>
<dbReference type="GO" id="GO:0043025">
    <property type="term" value="C:neuronal cell body"/>
    <property type="evidence" value="ECO:0000314"/>
    <property type="project" value="MGI"/>
</dbReference>
<dbReference type="GO" id="GO:0005634">
    <property type="term" value="C:nucleus"/>
    <property type="evidence" value="ECO:0000314"/>
    <property type="project" value="UniProtKB"/>
</dbReference>
<dbReference type="GO" id="GO:0005886">
    <property type="term" value="C:plasma membrane"/>
    <property type="evidence" value="ECO:0000314"/>
    <property type="project" value="UniProtKB"/>
</dbReference>
<dbReference type="GO" id="GO:0099524">
    <property type="term" value="C:postsynaptic cytosol"/>
    <property type="evidence" value="ECO:0000314"/>
    <property type="project" value="SynGO"/>
</dbReference>
<dbReference type="GO" id="GO:0099523">
    <property type="term" value="C:presynaptic cytosol"/>
    <property type="evidence" value="ECO:0000314"/>
    <property type="project" value="SynGO"/>
</dbReference>
<dbReference type="GO" id="GO:0005524">
    <property type="term" value="F:ATP binding"/>
    <property type="evidence" value="ECO:0007669"/>
    <property type="project" value="UniProtKB-KW"/>
</dbReference>
<dbReference type="GO" id="GO:0046872">
    <property type="term" value="F:metal ion binding"/>
    <property type="evidence" value="ECO:0007669"/>
    <property type="project" value="UniProtKB-KW"/>
</dbReference>
<dbReference type="GO" id="GO:0004715">
    <property type="term" value="F:non-membrane spanning protein tyrosine kinase activity"/>
    <property type="evidence" value="ECO:0007669"/>
    <property type="project" value="UniProtKB-EC"/>
</dbReference>
<dbReference type="GO" id="GO:0106310">
    <property type="term" value="F:protein serine kinase activity"/>
    <property type="evidence" value="ECO:0007669"/>
    <property type="project" value="RHEA"/>
</dbReference>
<dbReference type="GO" id="GO:0004674">
    <property type="term" value="F:protein serine/threonine kinase activity"/>
    <property type="evidence" value="ECO:0007669"/>
    <property type="project" value="UniProtKB-KW"/>
</dbReference>
<dbReference type="GO" id="GO:0004712">
    <property type="term" value="F:protein serine/threonine/tyrosine kinase activity"/>
    <property type="evidence" value="ECO:0007669"/>
    <property type="project" value="InterPro"/>
</dbReference>
<dbReference type="GO" id="GO:0004713">
    <property type="term" value="F:protein tyrosine kinase activity"/>
    <property type="evidence" value="ECO:0000266"/>
    <property type="project" value="MGI"/>
</dbReference>
<dbReference type="GO" id="GO:0050699">
    <property type="term" value="F:WW domain binding"/>
    <property type="evidence" value="ECO:0000353"/>
    <property type="project" value="BHF-UCL"/>
</dbReference>
<dbReference type="GO" id="GO:0006897">
    <property type="term" value="P:endocytosis"/>
    <property type="evidence" value="ECO:0007669"/>
    <property type="project" value="UniProtKB-KW"/>
</dbReference>
<dbReference type="GO" id="GO:0016310">
    <property type="term" value="P:phosphorylation"/>
    <property type="evidence" value="ECO:0000250"/>
    <property type="project" value="UniProtKB"/>
</dbReference>
<dbReference type="GO" id="GO:0007165">
    <property type="term" value="P:signal transduction"/>
    <property type="evidence" value="ECO:0007669"/>
    <property type="project" value="InterPro"/>
</dbReference>
<dbReference type="GO" id="GO:0007286">
    <property type="term" value="P:spermatid development"/>
    <property type="evidence" value="ECO:0000316"/>
    <property type="project" value="UniProtKB"/>
</dbReference>
<dbReference type="CDD" id="cd05040">
    <property type="entry name" value="PTKc_Ack_like"/>
    <property type="match status" value="1"/>
</dbReference>
<dbReference type="CDD" id="cd09539">
    <property type="entry name" value="SAM_TNK-like"/>
    <property type="match status" value="1"/>
</dbReference>
<dbReference type="CDD" id="cd14274">
    <property type="entry name" value="UBA_ACK1"/>
    <property type="match status" value="1"/>
</dbReference>
<dbReference type="CDD" id="cd14328">
    <property type="entry name" value="UBA_TNK1"/>
    <property type="match status" value="1"/>
</dbReference>
<dbReference type="FunFam" id="4.10.680.10:FF:000001">
    <property type="entry name" value="activated CDC42 kinase 1 isoform X1"/>
    <property type="match status" value="1"/>
</dbReference>
<dbReference type="FunFam" id="1.10.8.10:FF:000048">
    <property type="entry name" value="activated CDC42 kinase 1 isoform X2"/>
    <property type="match status" value="1"/>
</dbReference>
<dbReference type="FunFam" id="1.10.510.10:FF:000080">
    <property type="entry name" value="Putative activated CDC42 kinase 1"/>
    <property type="match status" value="1"/>
</dbReference>
<dbReference type="FunFam" id="3.30.200.20:FF:000107">
    <property type="entry name" value="Putative activated CDC42 kinase 1"/>
    <property type="match status" value="1"/>
</dbReference>
<dbReference type="Gene3D" id="4.10.680.10">
    <property type="entry name" value="Cdc42-like binding domain"/>
    <property type="match status" value="1"/>
</dbReference>
<dbReference type="Gene3D" id="1.10.8.10">
    <property type="entry name" value="DNA helicase RuvA subunit, C-terminal domain"/>
    <property type="match status" value="1"/>
</dbReference>
<dbReference type="Gene3D" id="3.30.200.20">
    <property type="entry name" value="Phosphorylase Kinase, domain 1"/>
    <property type="match status" value="1"/>
</dbReference>
<dbReference type="Gene3D" id="1.10.510.10">
    <property type="entry name" value="Transferase(Phosphotransferase) domain 1"/>
    <property type="match status" value="1"/>
</dbReference>
<dbReference type="InterPro" id="IPR055175">
    <property type="entry name" value="ACK/TNK-like_SAM"/>
</dbReference>
<dbReference type="InterPro" id="IPR030220">
    <property type="entry name" value="Ack1_UBA_dom"/>
</dbReference>
<dbReference type="InterPro" id="IPR015116">
    <property type="entry name" value="Cdc42-bd-like"/>
</dbReference>
<dbReference type="InterPro" id="IPR037085">
    <property type="entry name" value="Cdc42-bd-like_dom_sf"/>
</dbReference>
<dbReference type="InterPro" id="IPR052112">
    <property type="entry name" value="EGFR_SigReg_Kinase"/>
</dbReference>
<dbReference type="InterPro" id="IPR011009">
    <property type="entry name" value="Kinase-like_dom_sf"/>
</dbReference>
<dbReference type="InterPro" id="IPR021619">
    <property type="entry name" value="Mig-6"/>
</dbReference>
<dbReference type="InterPro" id="IPR000719">
    <property type="entry name" value="Prot_kinase_dom"/>
</dbReference>
<dbReference type="InterPro" id="IPR017441">
    <property type="entry name" value="Protein_kinase_ATP_BS"/>
</dbReference>
<dbReference type="InterPro" id="IPR001245">
    <property type="entry name" value="Ser-Thr/Tyr_kinase_cat_dom"/>
</dbReference>
<dbReference type="InterPro" id="IPR036028">
    <property type="entry name" value="SH3-like_dom_sf"/>
</dbReference>
<dbReference type="InterPro" id="IPR001452">
    <property type="entry name" value="SH3_domain"/>
</dbReference>
<dbReference type="InterPro" id="IPR049587">
    <property type="entry name" value="TNK-like_SAM"/>
</dbReference>
<dbReference type="InterPro" id="IPR008266">
    <property type="entry name" value="Tyr_kinase_AS"/>
</dbReference>
<dbReference type="InterPro" id="IPR020635">
    <property type="entry name" value="Tyr_kinase_cat_dom"/>
</dbReference>
<dbReference type="InterPro" id="IPR009060">
    <property type="entry name" value="UBA-like_sf"/>
</dbReference>
<dbReference type="PANTHER" id="PTHR14254">
    <property type="entry name" value="GENE 33 POLYPEPTIDE"/>
    <property type="match status" value="1"/>
</dbReference>
<dbReference type="PANTHER" id="PTHR14254:SF6">
    <property type="entry name" value="NON-SPECIFIC PROTEIN-TYROSINE KINASE"/>
    <property type="match status" value="1"/>
</dbReference>
<dbReference type="Pfam" id="PF09027">
    <property type="entry name" value="GTPase_binding"/>
    <property type="match status" value="1"/>
</dbReference>
<dbReference type="Pfam" id="PF11555">
    <property type="entry name" value="Inhibitor_Mig-6"/>
    <property type="match status" value="1"/>
</dbReference>
<dbReference type="Pfam" id="PF07714">
    <property type="entry name" value="PK_Tyr_Ser-Thr"/>
    <property type="match status" value="1"/>
</dbReference>
<dbReference type="Pfam" id="PF22931">
    <property type="entry name" value="SAM_TNK"/>
    <property type="match status" value="1"/>
</dbReference>
<dbReference type="Pfam" id="PF14604">
    <property type="entry name" value="SH3_9"/>
    <property type="match status" value="1"/>
</dbReference>
<dbReference type="PRINTS" id="PR00109">
    <property type="entry name" value="TYRKINASE"/>
</dbReference>
<dbReference type="SMART" id="SM00326">
    <property type="entry name" value="SH3"/>
    <property type="match status" value="1"/>
</dbReference>
<dbReference type="SMART" id="SM00219">
    <property type="entry name" value="TyrKc"/>
    <property type="match status" value="1"/>
</dbReference>
<dbReference type="SUPFAM" id="SSF56112">
    <property type="entry name" value="Protein kinase-like (PK-like)"/>
    <property type="match status" value="1"/>
</dbReference>
<dbReference type="SUPFAM" id="SSF50044">
    <property type="entry name" value="SH3-domain"/>
    <property type="match status" value="1"/>
</dbReference>
<dbReference type="SUPFAM" id="SSF46934">
    <property type="entry name" value="UBA-like"/>
    <property type="match status" value="1"/>
</dbReference>
<dbReference type="PROSITE" id="PS00107">
    <property type="entry name" value="PROTEIN_KINASE_ATP"/>
    <property type="match status" value="1"/>
</dbReference>
<dbReference type="PROSITE" id="PS50011">
    <property type="entry name" value="PROTEIN_KINASE_DOM"/>
    <property type="match status" value="1"/>
</dbReference>
<dbReference type="PROSITE" id="PS00109">
    <property type="entry name" value="PROTEIN_KINASE_TYR"/>
    <property type="match status" value="1"/>
</dbReference>
<dbReference type="PROSITE" id="PS50002">
    <property type="entry name" value="SH3"/>
    <property type="match status" value="1"/>
</dbReference>
<feature type="chain" id="PRO_0000088059" description="Activated CDC42 kinase 1">
    <location>
        <begin position="1"/>
        <end position="1055"/>
    </location>
</feature>
<feature type="domain" description="Protein kinase" evidence="3">
    <location>
        <begin position="126"/>
        <end position="385"/>
    </location>
</feature>
<feature type="domain" description="SH3" evidence="4">
    <location>
        <begin position="388"/>
        <end position="448"/>
    </location>
</feature>
<feature type="domain" description="CRIB">
    <location>
        <begin position="454"/>
        <end position="466"/>
    </location>
</feature>
<feature type="domain" description="UBA">
    <location>
        <begin position="973"/>
        <end position="1013"/>
    </location>
</feature>
<feature type="region of interest" description="SAM-like domain">
    <location>
        <begin position="1"/>
        <end position="110"/>
    </location>
</feature>
<feature type="region of interest" description="Disordered" evidence="6">
    <location>
        <begin position="91"/>
        <end position="110"/>
    </location>
</feature>
<feature type="region of interest" description="Disordered" evidence="6">
    <location>
        <begin position="505"/>
        <end position="548"/>
    </location>
</feature>
<feature type="region of interest" description="Required for interaction with SRC">
    <location>
        <begin position="638"/>
        <end position="667"/>
    </location>
</feature>
<feature type="region of interest" description="Required for interaction with NEDD4" evidence="12">
    <location>
        <begin position="647"/>
        <end position="650"/>
    </location>
</feature>
<feature type="region of interest" description="Disordered" evidence="6">
    <location>
        <begin position="737"/>
        <end position="855"/>
    </location>
</feature>
<feature type="region of interest" description="EBD domain">
    <location>
        <begin position="748"/>
        <end position="891"/>
    </location>
</feature>
<feature type="region of interest" description="Disordered" evidence="6">
    <location>
        <begin position="896"/>
        <end position="952"/>
    </location>
</feature>
<feature type="compositionally biased region" description="Pro residues" evidence="6">
    <location>
        <begin position="753"/>
        <end position="764"/>
    </location>
</feature>
<feature type="compositionally biased region" description="Pro residues" evidence="6">
    <location>
        <begin position="787"/>
        <end position="798"/>
    </location>
</feature>
<feature type="compositionally biased region" description="Low complexity" evidence="6">
    <location>
        <begin position="817"/>
        <end position="827"/>
    </location>
</feature>
<feature type="compositionally biased region" description="Pro residues" evidence="6">
    <location>
        <begin position="903"/>
        <end position="918"/>
    </location>
</feature>
<feature type="active site" description="Proton acceptor" evidence="3 5">
    <location>
        <position position="252"/>
    </location>
</feature>
<feature type="binding site" evidence="3">
    <location>
        <begin position="132"/>
        <end position="140"/>
    </location>
    <ligand>
        <name>ATP</name>
        <dbReference type="ChEBI" id="CHEBI:30616"/>
    </ligand>
</feature>
<feature type="binding site">
    <location>
        <position position="158"/>
    </location>
    <ligand>
        <name>ATP</name>
        <dbReference type="ChEBI" id="CHEBI:30616"/>
    </ligand>
</feature>
<feature type="modified residue" description="Phosphothreonine" evidence="20">
    <location>
        <position position="113"/>
    </location>
</feature>
<feature type="modified residue" description="Phosphotyrosine; by SRC and autocatalysis" evidence="2">
    <location>
        <position position="284"/>
    </location>
</feature>
<feature type="modified residue" description="Phosphotyrosine" evidence="14">
    <location>
        <position position="533"/>
    </location>
</feature>
<feature type="modified residue" description="Phosphotyrosine" evidence="2">
    <location>
        <position position="842"/>
    </location>
</feature>
<feature type="modified residue" description="Omega-N-methylarginine" evidence="21">
    <location>
        <position position="854"/>
    </location>
</feature>
<feature type="modified residue" description="Phosphotyrosine" evidence="2">
    <location>
        <position position="874"/>
    </location>
</feature>
<feature type="modified residue" description="Phosphotyrosine" evidence="2">
    <location>
        <position position="887"/>
    </location>
</feature>
<feature type="modified residue" description="Phosphoserine" evidence="2">
    <location>
        <position position="896"/>
    </location>
</feature>
<feature type="splice variant" id="VSP_008657" description="In isoform 2 and isoform 3." evidence="16 17">
    <original>REPPPRPPQPAIFTQKT</original>
    <variation>KP</variation>
    <location>
        <begin position="515"/>
        <end position="531"/>
    </location>
</feature>
<feature type="splice variant" id="VSP_008658" description="In isoform 2." evidence="16">
    <location>
        <begin position="980"/>
        <end position="1011"/>
    </location>
</feature>
<feature type="mutagenesis site" description="Loss of kinase activity." evidence="9">
    <original>K</original>
    <variation>A</variation>
    <location>
        <position position="158"/>
    </location>
</feature>
<feature type="mutagenesis site" description="Increase in autophosphorylation activity." evidence="9">
    <original>W</original>
    <variation>K</variation>
    <location>
        <position position="424"/>
    </location>
</feature>
<feature type="mutagenesis site" description="Loss of CDC42-binding and impairment of autophosphorylation." evidence="9">
    <original>H</original>
    <variation>D</variation>
    <location>
        <position position="464"/>
    </location>
</feature>
<feature type="mutagenesis site" description="Loss of interaction with NEDD4 and drastic reduction in its ubiquitination." evidence="10">
    <original>Y</original>
    <variation>A</variation>
    <location>
        <position position="650"/>
    </location>
</feature>
<feature type="sequence conflict" description="In Ref. 2; AAC04786." evidence="18" ref="2">
    <original>RR</original>
    <variation>SG</variation>
    <location>
        <begin position="57"/>
        <end position="58"/>
    </location>
</feature>
<feature type="sequence conflict" description="In Ref. 1; ABG46266." evidence="18" ref="1">
    <original>T</original>
    <variation>P</variation>
    <location>
        <position position="531"/>
    </location>
</feature>
<feature type="sequence conflict" description="In Ref. 1; ABG46266." evidence="18" ref="1">
    <original>K</original>
    <variation>E</variation>
    <location>
        <position position="574"/>
    </location>
</feature>
<feature type="sequence conflict" description="In Ref. 2; AAC04786." evidence="18" ref="2">
    <original>A</original>
    <variation>V</variation>
    <location>
        <position position="649"/>
    </location>
</feature>
<feature type="sequence conflict" description="In Ref. 3; BAC40063." evidence="18" ref="3">
    <original>L</original>
    <variation>V</variation>
    <location>
        <position position="818"/>
    </location>
</feature>
<feature type="sequence conflict" description="In Ref. 2; AAH52421 and 3; BAC40063." evidence="18" ref="2 3">
    <original>A</original>
    <variation>T</variation>
    <location>
        <position position="955"/>
    </location>
</feature>
<feature type="modified residue" description="Phosphotyrosine" evidence="19">
    <location sequence="O54967-2">
        <position position="518"/>
    </location>
</feature>
<feature type="modified residue" description="Phosphotyrosine" evidence="19">
    <location sequence="O54967-3">
        <position position="518"/>
    </location>
</feature>
<sequence length="1055" mass="116975">MQPEEGTGWLLELLSEVQLQQYFLRLRDDLNITRLSHFEYVKNEDLEKIGMGRPGQRRLWEAVKRRKAMCKRKSWMSKVFSGKRLEAEFPSQHSQSTFRKPSPTPGSLPGEGTLQSLTCLIGEKDLRLLEKLGDGSFGVVRRGEWDAPAGKTVSVAVKCLKPDVLSQPEAMDDFIREVNAMHSLDHRNLIRLYGVVLTLPMKMVTELAPLGSLLDRLRKHQGHFLLGTLSRYAVQVAEGMAYLESKRFIHRDLAARNLLLATRDLVKIGDFGLMRALPQNDDHYVMQEHRKVPFAWCAPESLKTRTFSHASDTWMFGVTLWEMFTYGQEPWIGLNGSQILHKIDKEGERLPRPEDCPQDIYNVMVQCWAHKPEDRPTFVALRDFLLEAQPTDMRALQDFEEPDKLHIQMNDVITVIEGRAENYWWRGQNTRTLCVGPFPRNVVTSVAGLSAQDISQPLQNSFIHTGHGDSDPRHCWGFPDRIDELYLGNPMDPPDLLSVELSTSRPTQHLGRVKREPPPRPPQPAIFTQKTTYDPVSEDPDPLSSDFKRLGLRKPALPRGLWLAKPSARVPGTKADRSSGGEVTLIDFGEEPVVPTPRPCAPSLAQLAMDACSLLDKTPPQSPTRALPRPLHPTPVVDWDARPLPPPPAYDDVAQDEDDFEVCSINSTLVGAGLPAGPSQGETNYAFVPEQAQMPPALEDNLFLPPQGGGKPPSSVQTAEIFQALQQECMRQLQVPTGQLTPSPTPGGDDKPQVPPRVPIPPRPTRPRVELSPAPSGEEETSRWPGPASPPRVPPREPLSPQGSRTPSPLVPPGSSPLPHRLSSSPGKTMPTTQSFASDPKYATPQVIQAPGPRAGPCILPIVRDGRKVSSTHYYLLPERPPYLERYQRFLREAQSPEEPAALPVPPLLPPPSTPAPAAPTATVRPMPQAAPDPKANFSTNNSNPGARPPSLRAAARLPQRGCPGDGQEAARPADKVQMLQAMVHGVTTEECQAALQSHSWSVQRAAQYLKVEQLFGLGLRPRVECHKVLEMFDWNLEQAGCHLLGSCGPAHHKR</sequence>
<protein>
    <recommendedName>
        <fullName>Activated CDC42 kinase 1</fullName>
        <shortName>ACK-1</shortName>
        <ecNumber>2.7.10.2</ecNumber>
        <ecNumber>2.7.11.1</ecNumber>
    </recommendedName>
    <alternativeName>
        <fullName>Non-receptor protein tyrosine kinase Ack</fullName>
    </alternativeName>
    <alternativeName>
        <fullName>Tyrosine kinase non-receptor protein 2</fullName>
    </alternativeName>
</protein>
<keyword id="KW-0025">Alternative splicing</keyword>
<keyword id="KW-0067">ATP-binding</keyword>
<keyword id="KW-0965">Cell junction</keyword>
<keyword id="KW-1003">Cell membrane</keyword>
<keyword id="KW-0168">Coated pit</keyword>
<keyword id="KW-0963">Cytoplasm</keyword>
<keyword id="KW-0968">Cytoplasmic vesicle</keyword>
<keyword id="KW-0254">Endocytosis</keyword>
<keyword id="KW-0967">Endosome</keyword>
<keyword id="KW-0418">Kinase</keyword>
<keyword id="KW-0460">Magnesium</keyword>
<keyword id="KW-0472">Membrane</keyword>
<keyword id="KW-0479">Metal-binding</keyword>
<keyword id="KW-0488">Methylation</keyword>
<keyword id="KW-0547">Nucleotide-binding</keyword>
<keyword id="KW-0539">Nucleus</keyword>
<keyword id="KW-0597">Phosphoprotein</keyword>
<keyword id="KW-1185">Reference proteome</keyword>
<keyword id="KW-0723">Serine/threonine-protein kinase</keyword>
<keyword id="KW-0728">SH3 domain</keyword>
<keyword id="KW-0808">Transferase</keyword>
<keyword id="KW-0829">Tyrosine-protein kinase</keyword>
<keyword id="KW-0832">Ubl conjugation</keyword>
<comment type="function">
    <text evidence="10 13">Non-receptor tyrosine-protein and serine/threonine-protein kinase that is implicated in cell spreading and migration, cell survival, cell growth and proliferation. Transduces extracellular signals to cytosolic and nuclear effectors. Phosphorylates AKT1, AR, MCF2, WASL and WWOX. Implicated in trafficking and clathrin-mediated endocytosis through binding to epidermal growth factor receptor (EGFR) and clathrin. Binds to both poly- and mono-ubiquitin and regulates ligand-induced degradation of EGFR, thereby contributing to the accumulation of EGFR at the limiting membrane of early endosomes. Downstream effector of CDC42 which mediates CDC42-dependent cell migration via phosphorylation of BCAR1. May be involved both in adult synaptic function and plasticity and in brain development. Activates AKT1 by phosphorylating it on 'Tyr-176'. Phosphorylates AR on 'Tyr-267' and 'Tyr-363' thereby promoting its recruitment to androgen-responsive enhancers (AREs). Phosphorylates WWOX on 'Tyr-287'. Phosphorylates MCF2, thereby enhancing its activity as a guanine nucleotide exchange factor (GEF) toward Rho family proteins. Contributes to the control of AXL receptor levels. Confers metastatic properties on cancer cells and promotes tumor growth by negatively regulating tumor suppressor such as WWOX and positively regulating pro-survival factors such as AKT1 and AR.</text>
</comment>
<comment type="catalytic activity">
    <reaction evidence="5">
        <text>L-tyrosyl-[protein] + ATP = O-phospho-L-tyrosyl-[protein] + ADP + H(+)</text>
        <dbReference type="Rhea" id="RHEA:10596"/>
        <dbReference type="Rhea" id="RHEA-COMP:10136"/>
        <dbReference type="Rhea" id="RHEA-COMP:20101"/>
        <dbReference type="ChEBI" id="CHEBI:15378"/>
        <dbReference type="ChEBI" id="CHEBI:30616"/>
        <dbReference type="ChEBI" id="CHEBI:46858"/>
        <dbReference type="ChEBI" id="CHEBI:61978"/>
        <dbReference type="ChEBI" id="CHEBI:456216"/>
        <dbReference type="EC" id="2.7.10.2"/>
    </reaction>
</comment>
<comment type="catalytic activity">
    <reaction>
        <text>L-seryl-[protein] + ATP = O-phospho-L-seryl-[protein] + ADP + H(+)</text>
        <dbReference type="Rhea" id="RHEA:17989"/>
        <dbReference type="Rhea" id="RHEA-COMP:9863"/>
        <dbReference type="Rhea" id="RHEA-COMP:11604"/>
        <dbReference type="ChEBI" id="CHEBI:15378"/>
        <dbReference type="ChEBI" id="CHEBI:29999"/>
        <dbReference type="ChEBI" id="CHEBI:30616"/>
        <dbReference type="ChEBI" id="CHEBI:83421"/>
        <dbReference type="ChEBI" id="CHEBI:456216"/>
        <dbReference type="EC" id="2.7.11.1"/>
    </reaction>
</comment>
<comment type="catalytic activity">
    <reaction>
        <text>L-threonyl-[protein] + ATP = O-phospho-L-threonyl-[protein] + ADP + H(+)</text>
        <dbReference type="Rhea" id="RHEA:46608"/>
        <dbReference type="Rhea" id="RHEA-COMP:11060"/>
        <dbReference type="Rhea" id="RHEA-COMP:11605"/>
        <dbReference type="ChEBI" id="CHEBI:15378"/>
        <dbReference type="ChEBI" id="CHEBI:30013"/>
        <dbReference type="ChEBI" id="CHEBI:30616"/>
        <dbReference type="ChEBI" id="CHEBI:61977"/>
        <dbReference type="ChEBI" id="CHEBI:456216"/>
        <dbReference type="EC" id="2.7.11.1"/>
    </reaction>
</comment>
<comment type="cofactor">
    <cofactor>
        <name>Mg(2+)</name>
        <dbReference type="ChEBI" id="CHEBI:18420"/>
    </cofactor>
</comment>
<comment type="subunit">
    <text evidence="1 7 10 12 13">Homodimer. Interacts with CSPG4 (activated). Interacts with MERTK (activated); stimulates autophosphorylation. May interact (phosphorylated) with HSP90AB1; maintains kinase activity. Interacts with NPHP1. Interacts with SNX9 (via SH3 domain). Interacts with SRC (via SH2 and SH3 domain). Part of a collagen stimulated complex involved in cell migration composed of CDC42, CRK, TNK2 and BCAR1/p130cas. Interacts with BCAR1/p130cas via SH3 domains. Forms complexes with GRB2 and numerous receptor tyrosine kinases (RTK) including LTK, AXL or PDGFRL, in which GRB2 promotes RTK recruitment by TNK2 (By similarity). Interacts with CDC42. Interacts with EGFR, and this interaction is dependent on EGF stimulation and kinase activity of EGFR. Interacts (via kinase domain) with AKT1. Interacts with NEDD4 (via WW3 domain). NEDD4L and EGF promote association with NEDD4.</text>
</comment>
<comment type="interaction">
    <interactant intactId="EBI-7780354">
        <id>O54967</id>
    </interactant>
    <interactant intactId="EBI-642202">
        <id>Q99M51</id>
        <label>Nck1</label>
    </interactant>
    <organismsDiffer>false</organismsDiffer>
    <experiments>2</experiments>
</comment>
<comment type="interaction">
    <interactant intactId="EBI-7780354">
        <id>O54967</id>
    </interactant>
    <interactant intactId="EBI-15578122">
        <id>P16333-1</id>
        <label>NCK1</label>
    </interactant>
    <organismsDiffer>true</organismsDiffer>
    <experiments>2</experiments>
</comment>
<comment type="subcellular location">
    <subcellularLocation>
        <location evidence="9 13">Cell membrane</location>
    </subcellularLocation>
    <subcellularLocation>
        <location evidence="13">Nucleus</location>
    </subcellularLocation>
    <subcellularLocation>
        <location evidence="10">Endosome</location>
    </subcellularLocation>
    <subcellularLocation>
        <location evidence="11">Cell junction</location>
        <location evidence="11">Adherens junction</location>
    </subcellularLocation>
    <subcellularLocation>
        <location>Cytoplasmic vesicle membrane</location>
        <topology>Peripheral membrane protein</topology>
        <orientation evidence="2">Cytoplasmic side</orientation>
    </subcellularLocation>
    <subcellularLocation>
        <location evidence="2">Cytoplasmic vesicle</location>
        <location evidence="2">Clathrin-coated vesicle</location>
    </subcellularLocation>
    <subcellularLocation>
        <location evidence="14">Membrane</location>
        <location evidence="14">Clathrin-coated pit</location>
    </subcellularLocation>
    <subcellularLocation>
        <location evidence="15">Cytoplasm</location>
        <location evidence="15">Cytosol</location>
    </subcellularLocation>
    <text evidence="10 13 14 15">The Tyr-284 phosphorylated form is found both in the membrane and nucleus (PubMed:20333297). Co-localizes with EGFR on endosomes (PubMed:17182860). Nuclear translocation is CDC42-dependent (PubMed:21169560). Detected in long filamentous cytosolic structures where it co-localizes with CTPS1 (PubMed:25223282).</text>
</comment>
<comment type="alternative products">
    <event type="alternative splicing"/>
    <isoform>
        <id>O54967-1</id>
        <name>1</name>
        <sequence type="displayed"/>
    </isoform>
    <isoform>
        <id>O54967-2</id>
        <name>2</name>
        <sequence type="described" ref="VSP_008657 VSP_008658"/>
    </isoform>
    <isoform>
        <id>O54967-3</id>
        <name>3</name>
        <sequence type="described" ref="VSP_008657"/>
    </isoform>
</comment>
<comment type="tissue specificity">
    <text evidence="7 8 9">Ubiquitously present in all tissues tested. Highly expressed in the adult central nervous system (CNS); hippocampus, neocortex, and cerebellum, both at dendritic spines and presynaptic axon terminals. Levels are strongly increased during enhanced neural activity.</text>
</comment>
<comment type="developmental stage">
    <text evidence="7 8">Highly expressed at 14 dpc-16 dpc in the forebrain, in the proliferative ventricular zone of the neocortex and hippocampus, and in the cortical and hippocampal plates. Also observed in the septal area, the ganglionic eminence, and in the dorsal thalamus and hypothalamus. In the hindbrain, expressed in many nuclei in the brain stem and in the cerebellar anlage, external granule cell layer, in Purkinje cells and the deep cerebellar nuclei.</text>
</comment>
<comment type="induction">
    <text evidence="12">Down-regulated by EGF.</text>
</comment>
<comment type="domain">
    <text>The EBD (EGFR-binding domain) domain is necessary for interaction with EGFR.</text>
</comment>
<comment type="domain">
    <text>The SAM-like domain is necessary for NEDD4-mediated ubiquitination. Promotes membrane localization and dimerization to allow for autophosphorylation.</text>
</comment>
<comment type="domain">
    <text>The UBA domain binds both poly- and mono-ubiquitin.</text>
</comment>
<comment type="PTM">
    <text evidence="1">Autophosphorylation regulates kinase activity. Phosphorylation on Tyr-533 is required for interaction with SRC and is observed during association with clathrin-coated pits (By similarity).</text>
</comment>
<comment type="PTM">
    <text evidence="12">Polyubiquitinated by NEDD4 and NEDD4L. Degradation can be induced by EGF and is lysosome-dependent.</text>
</comment>
<comment type="similarity">
    <text evidence="3">Belongs to the protein kinase superfamily. Tyr protein kinase family.</text>
</comment>
<comment type="sequence caution" evidence="18">
    <conflict type="miscellaneous discrepancy">
        <sequence resource="EMBL-CDS" id="AAH31168"/>
    </conflict>
    <text>Contaminating sequence. Sequence of unknown origin in the N-terminal part.</text>
</comment>
<name>ACK1_MOUSE</name>
<gene>
    <name type="primary">Tnk2</name>
    <name type="synonym">Ack1</name>
</gene>
<proteinExistence type="evidence at protein level"/>